<keyword id="KW-0004">4Fe-4S</keyword>
<keyword id="KW-0028">Amino-acid biosynthesis</keyword>
<keyword id="KW-0100">Branched-chain amino acid biosynthesis</keyword>
<keyword id="KW-0408">Iron</keyword>
<keyword id="KW-0411">Iron-sulfur</keyword>
<keyword id="KW-0432">Leucine biosynthesis</keyword>
<keyword id="KW-0456">Lyase</keyword>
<keyword id="KW-0479">Metal-binding</keyword>
<keyword id="KW-1185">Reference proteome</keyword>
<reference key="1">
    <citation type="journal article" date="2009" name="J. Bacteriol.">
        <title>Complete genome sequence and comparative genome analysis of enteropathogenic Escherichia coli O127:H6 strain E2348/69.</title>
        <authorList>
            <person name="Iguchi A."/>
            <person name="Thomson N.R."/>
            <person name="Ogura Y."/>
            <person name="Saunders D."/>
            <person name="Ooka T."/>
            <person name="Henderson I.R."/>
            <person name="Harris D."/>
            <person name="Asadulghani M."/>
            <person name="Kurokawa K."/>
            <person name="Dean P."/>
            <person name="Kenny B."/>
            <person name="Quail M.A."/>
            <person name="Thurston S."/>
            <person name="Dougan G."/>
            <person name="Hayashi T."/>
            <person name="Parkhill J."/>
            <person name="Frankel G."/>
        </authorList>
    </citation>
    <scope>NUCLEOTIDE SEQUENCE [LARGE SCALE GENOMIC DNA]</scope>
    <source>
        <strain>E2348/69 / EPEC</strain>
    </source>
</reference>
<dbReference type="EC" id="4.2.1.33" evidence="1"/>
<dbReference type="EMBL" id="FM180568">
    <property type="protein sequence ID" value="CAS07625.1"/>
    <property type="molecule type" value="Genomic_DNA"/>
</dbReference>
<dbReference type="RefSeq" id="WP_001140661.1">
    <property type="nucleotide sequence ID" value="NC_011601.1"/>
</dbReference>
<dbReference type="SMR" id="B7UIC2"/>
<dbReference type="KEGG" id="ecg:E2348C_0077"/>
<dbReference type="HOGENOM" id="CLU_006714_3_4_6"/>
<dbReference type="UniPathway" id="UPA00048">
    <property type="reaction ID" value="UER00071"/>
</dbReference>
<dbReference type="Proteomes" id="UP000008205">
    <property type="component" value="Chromosome"/>
</dbReference>
<dbReference type="GO" id="GO:0003861">
    <property type="term" value="F:3-isopropylmalate dehydratase activity"/>
    <property type="evidence" value="ECO:0007669"/>
    <property type="project" value="UniProtKB-UniRule"/>
</dbReference>
<dbReference type="GO" id="GO:0051539">
    <property type="term" value="F:4 iron, 4 sulfur cluster binding"/>
    <property type="evidence" value="ECO:0007669"/>
    <property type="project" value="UniProtKB-KW"/>
</dbReference>
<dbReference type="GO" id="GO:0046872">
    <property type="term" value="F:metal ion binding"/>
    <property type="evidence" value="ECO:0007669"/>
    <property type="project" value="UniProtKB-KW"/>
</dbReference>
<dbReference type="GO" id="GO:0009098">
    <property type="term" value="P:L-leucine biosynthetic process"/>
    <property type="evidence" value="ECO:0007669"/>
    <property type="project" value="UniProtKB-UniRule"/>
</dbReference>
<dbReference type="CDD" id="cd01583">
    <property type="entry name" value="IPMI"/>
    <property type="match status" value="1"/>
</dbReference>
<dbReference type="FunFam" id="3.30.499.10:FF:000006">
    <property type="entry name" value="3-isopropylmalate dehydratase large subunit"/>
    <property type="match status" value="1"/>
</dbReference>
<dbReference type="FunFam" id="3.30.499.10:FF:000007">
    <property type="entry name" value="3-isopropylmalate dehydratase large subunit"/>
    <property type="match status" value="1"/>
</dbReference>
<dbReference type="Gene3D" id="3.30.499.10">
    <property type="entry name" value="Aconitase, domain 3"/>
    <property type="match status" value="2"/>
</dbReference>
<dbReference type="HAMAP" id="MF_01026">
    <property type="entry name" value="LeuC_type1"/>
    <property type="match status" value="1"/>
</dbReference>
<dbReference type="InterPro" id="IPR004430">
    <property type="entry name" value="3-IsopropMal_deHydase_lsu"/>
</dbReference>
<dbReference type="InterPro" id="IPR015931">
    <property type="entry name" value="Acnase/IPM_dHydase_lsu_aba_1/3"/>
</dbReference>
<dbReference type="InterPro" id="IPR001030">
    <property type="entry name" value="Acoase/IPM_deHydtase_lsu_aba"/>
</dbReference>
<dbReference type="InterPro" id="IPR018136">
    <property type="entry name" value="Aconitase_4Fe-4S_BS"/>
</dbReference>
<dbReference type="InterPro" id="IPR036008">
    <property type="entry name" value="Aconitase_4Fe-4S_dom"/>
</dbReference>
<dbReference type="InterPro" id="IPR050067">
    <property type="entry name" value="IPM_dehydratase_rel_enz"/>
</dbReference>
<dbReference type="InterPro" id="IPR033941">
    <property type="entry name" value="IPMI_cat"/>
</dbReference>
<dbReference type="NCBIfam" id="TIGR00170">
    <property type="entry name" value="leuC"/>
    <property type="match status" value="1"/>
</dbReference>
<dbReference type="NCBIfam" id="NF004016">
    <property type="entry name" value="PRK05478.1"/>
    <property type="match status" value="1"/>
</dbReference>
<dbReference type="NCBIfam" id="NF009116">
    <property type="entry name" value="PRK12466.1"/>
    <property type="match status" value="1"/>
</dbReference>
<dbReference type="PANTHER" id="PTHR43822:SF9">
    <property type="entry name" value="3-ISOPROPYLMALATE DEHYDRATASE"/>
    <property type="match status" value="1"/>
</dbReference>
<dbReference type="PANTHER" id="PTHR43822">
    <property type="entry name" value="HOMOACONITASE, MITOCHONDRIAL-RELATED"/>
    <property type="match status" value="1"/>
</dbReference>
<dbReference type="Pfam" id="PF00330">
    <property type="entry name" value="Aconitase"/>
    <property type="match status" value="1"/>
</dbReference>
<dbReference type="PRINTS" id="PR00415">
    <property type="entry name" value="ACONITASE"/>
</dbReference>
<dbReference type="SUPFAM" id="SSF53732">
    <property type="entry name" value="Aconitase iron-sulfur domain"/>
    <property type="match status" value="1"/>
</dbReference>
<dbReference type="PROSITE" id="PS00450">
    <property type="entry name" value="ACONITASE_1"/>
    <property type="match status" value="1"/>
</dbReference>
<dbReference type="PROSITE" id="PS01244">
    <property type="entry name" value="ACONITASE_2"/>
    <property type="match status" value="1"/>
</dbReference>
<evidence type="ECO:0000255" key="1">
    <source>
        <dbReference type="HAMAP-Rule" id="MF_01026"/>
    </source>
</evidence>
<sequence length="466" mass="49900">MAKTLYEKLFDAHVVYEAENETPLLYIDRHLVHEVTSPQAFDGLRAHGRPVRQPGKTFATMDHNVSTQTKDINACGEMARIQMQELIKNCKEFGVELYDLNHPYQGIVHVMGPEQGVTLPGMTIVCGDSHTATHGAFGALAFGIGTSEVEHVLATQTLKQGRAKTMKIEVQGKAAPGITAKDIVLAIIGKTGSAGGTGHVVEFCGEAIRDLSMEGRMTLCNMAIEMGAKAGLVAPDETTFNYVKGRLHAPKGKDFDDAVAYWKTLQTDEGATFDTVVTLQAEEMSPQVTWGTNPGQVISVNDNIPDPASFADPVERASAEKALAYMGLKPGIPLTEVAIDKVFIGSCTNSRIEDLRAAAEIAKGRKVAPGVQALVVPGSGPVKAQAEAEGLDKIFIEAGFEWRLPGCSMCLAMNNDRLNPGERCASTSNRNFEGRQGRGGRTHLVSPAMAAAAAVTGHFADIRNIK</sequence>
<name>LEUC_ECO27</name>
<organism>
    <name type="scientific">Escherichia coli O127:H6 (strain E2348/69 / EPEC)</name>
    <dbReference type="NCBI Taxonomy" id="574521"/>
    <lineage>
        <taxon>Bacteria</taxon>
        <taxon>Pseudomonadati</taxon>
        <taxon>Pseudomonadota</taxon>
        <taxon>Gammaproteobacteria</taxon>
        <taxon>Enterobacterales</taxon>
        <taxon>Enterobacteriaceae</taxon>
        <taxon>Escherichia</taxon>
    </lineage>
</organism>
<proteinExistence type="inferred from homology"/>
<accession>B7UIC2</accession>
<protein>
    <recommendedName>
        <fullName evidence="1">3-isopropylmalate dehydratase large subunit</fullName>
        <ecNumber evidence="1">4.2.1.33</ecNumber>
    </recommendedName>
    <alternativeName>
        <fullName evidence="1">Alpha-IPM isomerase</fullName>
        <shortName evidence="1">IPMI</shortName>
    </alternativeName>
    <alternativeName>
        <fullName evidence="1">Isopropylmalate isomerase</fullName>
    </alternativeName>
</protein>
<gene>
    <name evidence="1" type="primary">leuC</name>
    <name type="ordered locus">E2348C_0077</name>
</gene>
<feature type="chain" id="PRO_1000149361" description="3-isopropylmalate dehydratase large subunit">
    <location>
        <begin position="1"/>
        <end position="466"/>
    </location>
</feature>
<feature type="binding site" evidence="1">
    <location>
        <position position="347"/>
    </location>
    <ligand>
        <name>[4Fe-4S] cluster</name>
        <dbReference type="ChEBI" id="CHEBI:49883"/>
    </ligand>
</feature>
<feature type="binding site" evidence="1">
    <location>
        <position position="407"/>
    </location>
    <ligand>
        <name>[4Fe-4S] cluster</name>
        <dbReference type="ChEBI" id="CHEBI:49883"/>
    </ligand>
</feature>
<feature type="binding site" evidence="1">
    <location>
        <position position="410"/>
    </location>
    <ligand>
        <name>[4Fe-4S] cluster</name>
        <dbReference type="ChEBI" id="CHEBI:49883"/>
    </ligand>
</feature>
<comment type="function">
    <text evidence="1">Catalyzes the isomerization between 2-isopropylmalate and 3-isopropylmalate, via the formation of 2-isopropylmaleate.</text>
</comment>
<comment type="catalytic activity">
    <reaction evidence="1">
        <text>(2R,3S)-3-isopropylmalate = (2S)-2-isopropylmalate</text>
        <dbReference type="Rhea" id="RHEA:32287"/>
        <dbReference type="ChEBI" id="CHEBI:1178"/>
        <dbReference type="ChEBI" id="CHEBI:35121"/>
        <dbReference type="EC" id="4.2.1.33"/>
    </reaction>
</comment>
<comment type="cofactor">
    <cofactor evidence="1">
        <name>[4Fe-4S] cluster</name>
        <dbReference type="ChEBI" id="CHEBI:49883"/>
    </cofactor>
    <text evidence="1">Binds 1 [4Fe-4S] cluster per subunit.</text>
</comment>
<comment type="pathway">
    <text evidence="1">Amino-acid biosynthesis; L-leucine biosynthesis; L-leucine from 3-methyl-2-oxobutanoate: step 2/4.</text>
</comment>
<comment type="subunit">
    <text evidence="1">Heterodimer of LeuC and LeuD.</text>
</comment>
<comment type="similarity">
    <text evidence="1">Belongs to the aconitase/IPM isomerase family. LeuC type 1 subfamily.</text>
</comment>